<keyword id="KW-0687">Ribonucleoprotein</keyword>
<keyword id="KW-0689">Ribosomal protein</keyword>
<comment type="similarity">
    <text evidence="1">Belongs to the bacterial ribosomal protein bL36 family.</text>
</comment>
<evidence type="ECO:0000255" key="1">
    <source>
        <dbReference type="HAMAP-Rule" id="MF_00251"/>
    </source>
</evidence>
<evidence type="ECO:0000305" key="2"/>
<accession>B1M760</accession>
<organism>
    <name type="scientific">Methylobacterium radiotolerans (strain ATCC 27329 / DSM 1819 / JCM 2831 / NBRC 15690 / NCIMB 10815 / 0-1)</name>
    <dbReference type="NCBI Taxonomy" id="426355"/>
    <lineage>
        <taxon>Bacteria</taxon>
        <taxon>Pseudomonadati</taxon>
        <taxon>Pseudomonadota</taxon>
        <taxon>Alphaproteobacteria</taxon>
        <taxon>Hyphomicrobiales</taxon>
        <taxon>Methylobacteriaceae</taxon>
        <taxon>Methylobacterium</taxon>
    </lineage>
</organism>
<reference key="1">
    <citation type="submission" date="2008-03" db="EMBL/GenBank/DDBJ databases">
        <title>Complete sequence of chromosome of Methylobacterium radiotolerans JCM 2831.</title>
        <authorList>
            <consortium name="US DOE Joint Genome Institute"/>
            <person name="Copeland A."/>
            <person name="Lucas S."/>
            <person name="Lapidus A."/>
            <person name="Glavina del Rio T."/>
            <person name="Dalin E."/>
            <person name="Tice H."/>
            <person name="Bruce D."/>
            <person name="Goodwin L."/>
            <person name="Pitluck S."/>
            <person name="Kiss H."/>
            <person name="Brettin T."/>
            <person name="Detter J.C."/>
            <person name="Han C."/>
            <person name="Kuske C.R."/>
            <person name="Schmutz J."/>
            <person name="Larimer F."/>
            <person name="Land M."/>
            <person name="Hauser L."/>
            <person name="Kyrpides N."/>
            <person name="Mikhailova N."/>
            <person name="Marx C.J."/>
            <person name="Richardson P."/>
        </authorList>
    </citation>
    <scope>NUCLEOTIDE SEQUENCE [LARGE SCALE GENOMIC DNA]</scope>
    <source>
        <strain>ATCC 27329 / DSM 1819 / JCM 2831 / NBRC 15690 / NCIMB 10815 / 0-1</strain>
    </source>
</reference>
<name>RL36_METRJ</name>
<protein>
    <recommendedName>
        <fullName evidence="1">Large ribosomal subunit protein bL36</fullName>
    </recommendedName>
    <alternativeName>
        <fullName evidence="2">50S ribosomal protein L36</fullName>
    </alternativeName>
</protein>
<proteinExistence type="inferred from homology"/>
<dbReference type="EMBL" id="CP001001">
    <property type="protein sequence ID" value="ACB22158.1"/>
    <property type="molecule type" value="Genomic_DNA"/>
</dbReference>
<dbReference type="SMR" id="B1M760"/>
<dbReference type="STRING" id="426355.Mrad2831_0131"/>
<dbReference type="KEGG" id="mrd:Mrad2831_0131"/>
<dbReference type="eggNOG" id="COG0257">
    <property type="taxonomic scope" value="Bacteria"/>
</dbReference>
<dbReference type="HOGENOM" id="CLU_135723_3_2_5"/>
<dbReference type="OrthoDB" id="9801558at2"/>
<dbReference type="Proteomes" id="UP000006589">
    <property type="component" value="Chromosome"/>
</dbReference>
<dbReference type="GO" id="GO:1990904">
    <property type="term" value="C:ribonucleoprotein complex"/>
    <property type="evidence" value="ECO:0007669"/>
    <property type="project" value="UniProtKB-KW"/>
</dbReference>
<dbReference type="GO" id="GO:0005840">
    <property type="term" value="C:ribosome"/>
    <property type="evidence" value="ECO:0007669"/>
    <property type="project" value="UniProtKB-KW"/>
</dbReference>
<dbReference type="GO" id="GO:0003735">
    <property type="term" value="F:structural constituent of ribosome"/>
    <property type="evidence" value="ECO:0007669"/>
    <property type="project" value="InterPro"/>
</dbReference>
<dbReference type="GO" id="GO:0006412">
    <property type="term" value="P:translation"/>
    <property type="evidence" value="ECO:0007669"/>
    <property type="project" value="UniProtKB-UniRule"/>
</dbReference>
<dbReference type="HAMAP" id="MF_00251">
    <property type="entry name" value="Ribosomal_bL36"/>
    <property type="match status" value="1"/>
</dbReference>
<dbReference type="InterPro" id="IPR000473">
    <property type="entry name" value="Ribosomal_bL36"/>
</dbReference>
<dbReference type="InterPro" id="IPR035977">
    <property type="entry name" value="Ribosomal_bL36_sp"/>
</dbReference>
<dbReference type="InterPro" id="IPR047621">
    <property type="entry name" value="Ribosomal_L36_bact"/>
</dbReference>
<dbReference type="NCBIfam" id="NF002021">
    <property type="entry name" value="PRK00831.1"/>
    <property type="match status" value="1"/>
</dbReference>
<dbReference type="NCBIfam" id="TIGR01022">
    <property type="entry name" value="rpmJ_bact"/>
    <property type="match status" value="1"/>
</dbReference>
<dbReference type="PANTHER" id="PTHR47781">
    <property type="entry name" value="50S RIBOSOMAL PROTEIN L36 2"/>
    <property type="match status" value="1"/>
</dbReference>
<dbReference type="PANTHER" id="PTHR47781:SF1">
    <property type="entry name" value="LARGE RIBOSOMAL SUBUNIT PROTEIN BL36B"/>
    <property type="match status" value="1"/>
</dbReference>
<dbReference type="Pfam" id="PF00444">
    <property type="entry name" value="Ribosomal_L36"/>
    <property type="match status" value="1"/>
</dbReference>
<dbReference type="SUPFAM" id="SSF57840">
    <property type="entry name" value="Ribosomal protein L36"/>
    <property type="match status" value="1"/>
</dbReference>
<dbReference type="PROSITE" id="PS00828">
    <property type="entry name" value="RIBOSOMAL_L36"/>
    <property type="match status" value="1"/>
</dbReference>
<sequence>MKIRNSLKSLRGRHRDNQLVRRKGRVYVINKTQKRFKARQG</sequence>
<gene>
    <name evidence="1" type="primary">rpmJ</name>
    <name type="ordered locus">Mrad2831_0131</name>
</gene>
<feature type="chain" id="PRO_1000101043" description="Large ribosomal subunit protein bL36">
    <location>
        <begin position="1"/>
        <end position="41"/>
    </location>
</feature>